<accession>Q5NGV7</accession>
<name>KATG_FRATT</name>
<dbReference type="EC" id="1.11.1.21" evidence="1"/>
<dbReference type="EMBL" id="AY662299">
    <property type="protein sequence ID" value="AAT77112.1"/>
    <property type="molecule type" value="Genomic_DNA"/>
</dbReference>
<dbReference type="EMBL" id="AJ749949">
    <property type="protein sequence ID" value="CAG45354.1"/>
    <property type="molecule type" value="Genomic_DNA"/>
</dbReference>
<dbReference type="RefSeq" id="WP_003020536.1">
    <property type="nucleotide sequence ID" value="NC_006570.2"/>
</dbReference>
<dbReference type="RefSeq" id="YP_169735.1">
    <property type="nucleotide sequence ID" value="NC_006570.2"/>
</dbReference>
<dbReference type="SMR" id="Q5NGV7"/>
<dbReference type="IntAct" id="Q5NGV7">
    <property type="interactions" value="23"/>
</dbReference>
<dbReference type="STRING" id="177416.FTT_0721c"/>
<dbReference type="PeroxiBase" id="2678">
    <property type="entry name" value="FtCP01_SCHU"/>
</dbReference>
<dbReference type="DNASU" id="3192098"/>
<dbReference type="EnsemblBacteria" id="CAG45354">
    <property type="protein sequence ID" value="CAG45354"/>
    <property type="gene ID" value="FTT_0721c"/>
</dbReference>
<dbReference type="KEGG" id="ftu:FTT_0721c"/>
<dbReference type="eggNOG" id="COG0376">
    <property type="taxonomic scope" value="Bacteria"/>
</dbReference>
<dbReference type="OrthoDB" id="9759743at2"/>
<dbReference type="Proteomes" id="UP000001174">
    <property type="component" value="Chromosome"/>
</dbReference>
<dbReference type="GO" id="GO:0005829">
    <property type="term" value="C:cytosol"/>
    <property type="evidence" value="ECO:0007669"/>
    <property type="project" value="TreeGrafter"/>
</dbReference>
<dbReference type="GO" id="GO:0005576">
    <property type="term" value="C:extracellular region"/>
    <property type="evidence" value="ECO:0007669"/>
    <property type="project" value="UniProtKB-SubCell"/>
</dbReference>
<dbReference type="GO" id="GO:0042597">
    <property type="term" value="C:periplasmic space"/>
    <property type="evidence" value="ECO:0007669"/>
    <property type="project" value="UniProtKB-SubCell"/>
</dbReference>
<dbReference type="GO" id="GO:0004096">
    <property type="term" value="F:catalase activity"/>
    <property type="evidence" value="ECO:0007669"/>
    <property type="project" value="UniProtKB-UniRule"/>
</dbReference>
<dbReference type="GO" id="GO:0020037">
    <property type="term" value="F:heme binding"/>
    <property type="evidence" value="ECO:0007669"/>
    <property type="project" value="InterPro"/>
</dbReference>
<dbReference type="GO" id="GO:0046872">
    <property type="term" value="F:metal ion binding"/>
    <property type="evidence" value="ECO:0007669"/>
    <property type="project" value="UniProtKB-KW"/>
</dbReference>
<dbReference type="GO" id="GO:0070301">
    <property type="term" value="P:cellular response to hydrogen peroxide"/>
    <property type="evidence" value="ECO:0007669"/>
    <property type="project" value="TreeGrafter"/>
</dbReference>
<dbReference type="GO" id="GO:0042744">
    <property type="term" value="P:hydrogen peroxide catabolic process"/>
    <property type="evidence" value="ECO:0007669"/>
    <property type="project" value="UniProtKB-KW"/>
</dbReference>
<dbReference type="CDD" id="cd00649">
    <property type="entry name" value="catalase_peroxidase_1"/>
    <property type="match status" value="1"/>
</dbReference>
<dbReference type="CDD" id="cd08200">
    <property type="entry name" value="catalase_peroxidase_2"/>
    <property type="match status" value="1"/>
</dbReference>
<dbReference type="Gene3D" id="1.10.520.10">
    <property type="match status" value="2"/>
</dbReference>
<dbReference type="Gene3D" id="1.10.420.10">
    <property type="entry name" value="Peroxidase, domain 2"/>
    <property type="match status" value="2"/>
</dbReference>
<dbReference type="HAMAP" id="MF_01961">
    <property type="entry name" value="Catal_peroxid"/>
    <property type="match status" value="1"/>
</dbReference>
<dbReference type="InterPro" id="IPR000763">
    <property type="entry name" value="Catalase_peroxidase"/>
</dbReference>
<dbReference type="InterPro" id="IPR002016">
    <property type="entry name" value="Haem_peroxidase"/>
</dbReference>
<dbReference type="InterPro" id="IPR010255">
    <property type="entry name" value="Haem_peroxidase_sf"/>
</dbReference>
<dbReference type="InterPro" id="IPR019794">
    <property type="entry name" value="Peroxidases_AS"/>
</dbReference>
<dbReference type="InterPro" id="IPR019793">
    <property type="entry name" value="Peroxidases_heam-ligand_BS"/>
</dbReference>
<dbReference type="NCBIfam" id="TIGR00198">
    <property type="entry name" value="cat_per_HPI"/>
    <property type="match status" value="1"/>
</dbReference>
<dbReference type="NCBIfam" id="NF011635">
    <property type="entry name" value="PRK15061.1"/>
    <property type="match status" value="1"/>
</dbReference>
<dbReference type="PANTHER" id="PTHR30555:SF0">
    <property type="entry name" value="CATALASE-PEROXIDASE"/>
    <property type="match status" value="1"/>
</dbReference>
<dbReference type="PANTHER" id="PTHR30555">
    <property type="entry name" value="HYDROPEROXIDASE I, BIFUNCTIONAL CATALASE-PEROXIDASE"/>
    <property type="match status" value="1"/>
</dbReference>
<dbReference type="Pfam" id="PF00141">
    <property type="entry name" value="peroxidase"/>
    <property type="match status" value="2"/>
</dbReference>
<dbReference type="PRINTS" id="PR00460">
    <property type="entry name" value="BPEROXIDASE"/>
</dbReference>
<dbReference type="PRINTS" id="PR00458">
    <property type="entry name" value="PEROXIDASE"/>
</dbReference>
<dbReference type="SUPFAM" id="SSF48113">
    <property type="entry name" value="Heme-dependent peroxidases"/>
    <property type="match status" value="2"/>
</dbReference>
<dbReference type="PROSITE" id="PS00435">
    <property type="entry name" value="PEROXIDASE_1"/>
    <property type="match status" value="1"/>
</dbReference>
<dbReference type="PROSITE" id="PS00436">
    <property type="entry name" value="PEROXIDASE_2"/>
    <property type="match status" value="1"/>
</dbReference>
<dbReference type="PROSITE" id="PS50873">
    <property type="entry name" value="PEROXIDASE_4"/>
    <property type="match status" value="1"/>
</dbReference>
<sequence length="741" mass="82501">MLKKIVTALGMSGMLLASSNAIAEDTTTKNDNLSPQSVDLSPLRNLNKLDSPMDKDYNYHQAFKKLDTEQLKKDMQDLLTQSQDWWPADFGNYGPFFIRLSWHDAGTYRIYDGRGGANRGQQRFSPLNSWPDNVNLDKARQLLWPIKQKYGDAVSWSDLIVLAGTVSLESMGMKPIGFAFGREDDWQGDDTNWGLSPEEIMSSNVRDGKLAPAYAATQMGLIYVNPEGPDGKPDIKGAASEIRQAFRAMGMTDKETVALIAGGHTFGKTHGAVPEDKVKQAIGPAPDKAPIEQQGLGWHNSYGTGNGDDTMGSGLEGSWTSTPTFWNHDFLHNLYNLDWKKTLSPAGAHQWTPTNAKPENMVPDAHKPGVKHKPIMFTTDLALKEDDGFNKYTQEFYNNPEEFKEEFAKAWFKLTHRDMGPKSRYIGPWIPEQNFIWQDPVPAADYKQVSTQDIAQLEQDIINSGLTNQQLIKTAWDSASTYRKTDYRGGSNGARIALAPEKDWQMNEPAKLEVVLTKLKEIQTNFNNSKTDGTKVSLADLIVLGGNVGVEQAAKQAGYNIQMPFVPGRTDATQAQTDIESFNYLKTKSDGFINYTDGSVSADKLPQTLVEKASMLDLNIPEMTVLVGGMRALDVNYDNSQEGVLTTTPGQLNNSFFVNLLDMSTQWKKSDKKDGEYIGIDRKTGKQKWTASPVDLIFGSNSELKAVAQVYAENGNEQKFVNDFAKAWHKVMMLGRFDVQQ</sequence>
<comment type="function">
    <text evidence="1">Bifunctional enzyme with both catalase and broad-spectrum peroxidase activity.</text>
</comment>
<comment type="catalytic activity">
    <reaction evidence="1">
        <text>H2O2 + AH2 = A + 2 H2O</text>
        <dbReference type="Rhea" id="RHEA:30275"/>
        <dbReference type="ChEBI" id="CHEBI:13193"/>
        <dbReference type="ChEBI" id="CHEBI:15377"/>
        <dbReference type="ChEBI" id="CHEBI:16240"/>
        <dbReference type="ChEBI" id="CHEBI:17499"/>
        <dbReference type="EC" id="1.11.1.21"/>
    </reaction>
</comment>
<comment type="catalytic activity">
    <reaction evidence="1">
        <text>2 H2O2 = O2 + 2 H2O</text>
        <dbReference type="Rhea" id="RHEA:20309"/>
        <dbReference type="ChEBI" id="CHEBI:15377"/>
        <dbReference type="ChEBI" id="CHEBI:15379"/>
        <dbReference type="ChEBI" id="CHEBI:16240"/>
        <dbReference type="EC" id="1.11.1.21"/>
    </reaction>
</comment>
<comment type="cofactor">
    <cofactor evidence="1">
        <name>heme b</name>
        <dbReference type="ChEBI" id="CHEBI:60344"/>
    </cofactor>
    <text evidence="1">Binds 1 heme b (iron(II)-protoporphyrin IX) group per dimer.</text>
</comment>
<comment type="subunit">
    <text evidence="1">Homodimer or homotetramer.</text>
</comment>
<comment type="subcellular location">
    <subcellularLocation>
        <location evidence="2">Secreted</location>
    </subcellularLocation>
    <subcellularLocation>
        <location evidence="2">Periplasm</location>
    </subcellularLocation>
    <text>Released by the bacterium intracellularly in host macrophages.</text>
</comment>
<comment type="PTM">
    <text evidence="1">Formation of the three residue Trp-Tyr-Met cross-link is important for the catalase, but not the peroxidase activity of the enzyme.</text>
</comment>
<comment type="similarity">
    <text evidence="1">Belongs to the peroxidase family. Peroxidase/catalase subfamily.</text>
</comment>
<proteinExistence type="evidence at protein level"/>
<feature type="signal peptide" evidence="1 2">
    <location>
        <begin position="1"/>
        <end position="23"/>
    </location>
</feature>
<feature type="chain" id="PRO_0000354794" description="Catalase-peroxidase">
    <location>
        <begin position="24"/>
        <end position="741"/>
    </location>
</feature>
<feature type="active site" description="Proton acceptor" evidence="1">
    <location>
        <position position="103"/>
    </location>
</feature>
<feature type="binding site" description="axial binding residue" evidence="1">
    <location>
        <position position="264"/>
    </location>
    <ligand>
        <name>heme b</name>
        <dbReference type="ChEBI" id="CHEBI:60344"/>
    </ligand>
    <ligandPart>
        <name>Fe</name>
        <dbReference type="ChEBI" id="CHEBI:18248"/>
    </ligandPart>
</feature>
<feature type="site" description="Transition state stabilizer" evidence="1">
    <location>
        <position position="99"/>
    </location>
</feature>
<feature type="cross-link" description="Tryptophyl-tyrosyl-methioninium (Trp-Tyr) (with M-249)" evidence="1">
    <location>
        <begin position="102"/>
        <end position="223"/>
    </location>
</feature>
<feature type="cross-link" description="Tryptophyl-tyrosyl-methioninium (Tyr-Met) (with W-102)" evidence="1">
    <location>
        <begin position="223"/>
        <end position="249"/>
    </location>
</feature>
<evidence type="ECO:0000255" key="1">
    <source>
        <dbReference type="HAMAP-Rule" id="MF_01961"/>
    </source>
</evidence>
<evidence type="ECO:0000269" key="2">
    <source>
    </source>
</evidence>
<organism>
    <name type="scientific">Francisella tularensis subsp. tularensis (strain SCHU S4 / Schu 4)</name>
    <dbReference type="NCBI Taxonomy" id="177416"/>
    <lineage>
        <taxon>Bacteria</taxon>
        <taxon>Pseudomonadati</taxon>
        <taxon>Pseudomonadota</taxon>
        <taxon>Gammaproteobacteria</taxon>
        <taxon>Thiotrichales</taxon>
        <taxon>Francisellaceae</taxon>
        <taxon>Francisella</taxon>
    </lineage>
</organism>
<gene>
    <name evidence="1" type="primary">katG</name>
    <name type="ordered locus">FTT_0721c</name>
</gene>
<protein>
    <recommendedName>
        <fullName evidence="1">Catalase-peroxidase</fullName>
        <shortName evidence="1">CP</shortName>
        <ecNumber evidence="1">1.11.1.21</ecNumber>
    </recommendedName>
    <alternativeName>
        <fullName evidence="1">Peroxidase/catalase</fullName>
    </alternativeName>
</protein>
<keyword id="KW-0903">Direct protein sequencing</keyword>
<keyword id="KW-0349">Heme</keyword>
<keyword id="KW-0376">Hydrogen peroxide</keyword>
<keyword id="KW-0408">Iron</keyword>
<keyword id="KW-0479">Metal-binding</keyword>
<keyword id="KW-0560">Oxidoreductase</keyword>
<keyword id="KW-0574">Periplasm</keyword>
<keyword id="KW-0575">Peroxidase</keyword>
<keyword id="KW-1185">Reference proteome</keyword>
<keyword id="KW-0964">Secreted</keyword>
<keyword id="KW-0732">Signal</keyword>
<reference key="1">
    <citation type="journal article" date="2006" name="Infect. Immun.">
        <title>Identification, recombinant expression, immunolocalization in macrophages, and T-cell responsiveness of the major extracellular proteins of Francisella tularensis.</title>
        <authorList>
            <person name="Lee B.-Y."/>
            <person name="Horwitz M.A."/>
            <person name="Clemens D.L."/>
        </authorList>
    </citation>
    <scope>NUCLEOTIDE SEQUENCE [GENOMIC DNA]</scope>
    <scope>PROTEIN SEQUENCE OF 24-41</scope>
    <scope>SUBCELLULAR LOCATION</scope>
    <source>
        <strain>NY 96-3369</strain>
    </source>
</reference>
<reference key="2">
    <citation type="journal article" date="2005" name="Nat. Genet.">
        <title>The complete genome sequence of Francisella tularensis, the causative agent of tularemia.</title>
        <authorList>
            <person name="Larsson P."/>
            <person name="Oyston P.C.F."/>
            <person name="Chain P."/>
            <person name="Chu M.C."/>
            <person name="Duffield M."/>
            <person name="Fuxelius H.-H."/>
            <person name="Garcia E."/>
            <person name="Haelltorp G."/>
            <person name="Johansson D."/>
            <person name="Isherwood K.E."/>
            <person name="Karp P.D."/>
            <person name="Larsson E."/>
            <person name="Liu Y."/>
            <person name="Michell S."/>
            <person name="Prior J."/>
            <person name="Prior R."/>
            <person name="Malfatti S."/>
            <person name="Sjoestedt A."/>
            <person name="Svensson K."/>
            <person name="Thompson N."/>
            <person name="Vergez L."/>
            <person name="Wagg J.K."/>
            <person name="Wren B.W."/>
            <person name="Lindler L.E."/>
            <person name="Andersson S.G.E."/>
            <person name="Forsman M."/>
            <person name="Titball R.W."/>
        </authorList>
    </citation>
    <scope>NUCLEOTIDE SEQUENCE [LARGE SCALE GENOMIC DNA]</scope>
    <source>
        <strain>SCHU S4 / Schu 4</strain>
    </source>
</reference>